<keyword id="KW-0963">Cytoplasm</keyword>
<keyword id="KW-1185">Reference proteome</keyword>
<keyword id="KW-0687">Ribonucleoprotein</keyword>
<keyword id="KW-0689">Ribosomal protein</keyword>
<sequence>MAPANLPSVFNATSQDIEMLLAAQSHIGSKNLQVHMAPYLWKTRQDGVNVINVGKTWEKIVLAARIITAIDNPADVCVISARPYGQRAVLKFAAHTGAQAIAGRFTPGSFTNYITRSFKEPRLIVVTDPRTDAQAIKEASYVNIPVIALCDTDSPTEYVDVAIPTNNKGRHAIGCIWWMLAREVLRLRGTIYNRETPWDVMVDLYFYRDPEAEAEDKVEEEKLAGVEEVGPAAIESGFATGGGDWEATAPAAASGWDDAAAQPQNWDSAAQGAASWDEAAAPKEGQW</sequence>
<comment type="function">
    <text evidence="1">Required for the assembly and/or stability of the 40S ribosomal subunit. Required for the processing of the 20S rRNA-precursor to mature 18S rRNA in a late step of the maturation of 40S ribosomal subunits.</text>
</comment>
<comment type="subunit">
    <text evidence="1">Component of the small ribosomal subunit. Mature ribosomes consist of a small (40S) and a large (60S) subunit. The 40S subunit contains about 33 different proteins and 1 molecule of RNA (18S). The 60S subunit contains about 49 different proteins and 3 molecules of RNA (25S, 5.8S and 5S). Interacts with RPS21.</text>
</comment>
<comment type="subcellular location">
    <subcellularLocation>
        <location evidence="1">Cytoplasm</location>
    </subcellularLocation>
</comment>
<comment type="similarity">
    <text evidence="1">Belongs to the universal ribosomal protein uS2 family.</text>
</comment>
<gene>
    <name evidence="1" type="primary">RPS0</name>
    <name type="ORF">MGG_11776</name>
</gene>
<name>RSSA_PYRO7</name>
<feature type="chain" id="PRO_0000371637" description="Small ribosomal subunit protein uS2">
    <location>
        <begin position="1"/>
        <end position="287"/>
    </location>
</feature>
<feature type="region of interest" description="Disordered" evidence="2">
    <location>
        <begin position="235"/>
        <end position="287"/>
    </location>
</feature>
<feature type="compositionally biased region" description="Low complexity" evidence="2">
    <location>
        <begin position="247"/>
        <end position="261"/>
    </location>
</feature>
<dbReference type="EMBL" id="CM001231">
    <property type="protein sequence ID" value="EHA57151.1"/>
    <property type="molecule type" value="Genomic_DNA"/>
</dbReference>
<dbReference type="RefSeq" id="XP_003709763.1">
    <property type="nucleotide sequence ID" value="XM_003709715.1"/>
</dbReference>
<dbReference type="SMR" id="A4R188"/>
<dbReference type="FunCoup" id="A4R188">
    <property type="interactions" value="1247"/>
</dbReference>
<dbReference type="STRING" id="242507.A4R188"/>
<dbReference type="EnsemblFungi" id="MGG_11776T0">
    <property type="protein sequence ID" value="MGG_11776T0"/>
    <property type="gene ID" value="MGG_11776"/>
</dbReference>
<dbReference type="GeneID" id="5049564"/>
<dbReference type="KEGG" id="mgr:MGG_11776"/>
<dbReference type="VEuPathDB" id="FungiDB:MGG_11776"/>
<dbReference type="eggNOG" id="KOG0830">
    <property type="taxonomic scope" value="Eukaryota"/>
</dbReference>
<dbReference type="HOGENOM" id="CLU_058171_0_1_1"/>
<dbReference type="InParanoid" id="A4R188"/>
<dbReference type="OMA" id="VKNFFEP"/>
<dbReference type="OrthoDB" id="414863at2759"/>
<dbReference type="Proteomes" id="UP000009058">
    <property type="component" value="Chromosome 1"/>
</dbReference>
<dbReference type="GO" id="GO:0022627">
    <property type="term" value="C:cytosolic small ribosomal subunit"/>
    <property type="evidence" value="ECO:0007669"/>
    <property type="project" value="UniProtKB-UniRule"/>
</dbReference>
<dbReference type="GO" id="GO:0003735">
    <property type="term" value="F:structural constituent of ribosome"/>
    <property type="evidence" value="ECO:0007669"/>
    <property type="project" value="UniProtKB-UniRule"/>
</dbReference>
<dbReference type="GO" id="GO:0000028">
    <property type="term" value="P:ribosomal small subunit assembly"/>
    <property type="evidence" value="ECO:0007669"/>
    <property type="project" value="UniProtKB-UniRule"/>
</dbReference>
<dbReference type="GO" id="GO:0006412">
    <property type="term" value="P:translation"/>
    <property type="evidence" value="ECO:0007669"/>
    <property type="project" value="UniProtKB-UniRule"/>
</dbReference>
<dbReference type="CDD" id="cd01425">
    <property type="entry name" value="RPS2"/>
    <property type="match status" value="1"/>
</dbReference>
<dbReference type="FunFam" id="3.40.50.10490:FF:000010">
    <property type="entry name" value="40S ribosomal protein S0"/>
    <property type="match status" value="1"/>
</dbReference>
<dbReference type="Gene3D" id="3.40.50.10490">
    <property type="entry name" value="Glucose-6-phosphate isomerase like protein, domain 1"/>
    <property type="match status" value="1"/>
</dbReference>
<dbReference type="HAMAP" id="MF_03015">
    <property type="entry name" value="Ribosomal_S2_euk"/>
    <property type="match status" value="1"/>
</dbReference>
<dbReference type="InterPro" id="IPR001865">
    <property type="entry name" value="Ribosomal_uS2"/>
</dbReference>
<dbReference type="InterPro" id="IPR018130">
    <property type="entry name" value="Ribosomal_uS2_CS"/>
</dbReference>
<dbReference type="InterPro" id="IPR027498">
    <property type="entry name" value="Ribosomal_uS2_euk"/>
</dbReference>
<dbReference type="InterPro" id="IPR005707">
    <property type="entry name" value="Ribosomal_uS2_euk/arc"/>
</dbReference>
<dbReference type="InterPro" id="IPR023591">
    <property type="entry name" value="Ribosomal_uS2_flav_dom_sf"/>
</dbReference>
<dbReference type="NCBIfam" id="TIGR01012">
    <property type="entry name" value="uS2_euk_arch"/>
    <property type="match status" value="1"/>
</dbReference>
<dbReference type="PANTHER" id="PTHR11489">
    <property type="entry name" value="40S RIBOSOMAL PROTEIN SA"/>
    <property type="match status" value="1"/>
</dbReference>
<dbReference type="Pfam" id="PF00318">
    <property type="entry name" value="Ribosomal_S2"/>
    <property type="match status" value="2"/>
</dbReference>
<dbReference type="PRINTS" id="PR00395">
    <property type="entry name" value="RIBOSOMALS2"/>
</dbReference>
<dbReference type="SUPFAM" id="SSF52313">
    <property type="entry name" value="Ribosomal protein S2"/>
    <property type="match status" value="1"/>
</dbReference>
<dbReference type="PROSITE" id="PS00962">
    <property type="entry name" value="RIBOSOMAL_S2_1"/>
    <property type="match status" value="1"/>
</dbReference>
<dbReference type="PROSITE" id="PS00963">
    <property type="entry name" value="RIBOSOMAL_S2_2"/>
    <property type="match status" value="1"/>
</dbReference>
<protein>
    <recommendedName>
        <fullName evidence="1">Small ribosomal subunit protein uS2</fullName>
    </recommendedName>
    <alternativeName>
        <fullName evidence="3">40S ribosomal protein S0</fullName>
    </alternativeName>
</protein>
<organism>
    <name type="scientific">Pyricularia oryzae (strain 70-15 / ATCC MYA-4617 / FGSC 8958)</name>
    <name type="common">Rice blast fungus</name>
    <name type="synonym">Magnaporthe oryzae</name>
    <dbReference type="NCBI Taxonomy" id="242507"/>
    <lineage>
        <taxon>Eukaryota</taxon>
        <taxon>Fungi</taxon>
        <taxon>Dikarya</taxon>
        <taxon>Ascomycota</taxon>
        <taxon>Pezizomycotina</taxon>
        <taxon>Sordariomycetes</taxon>
        <taxon>Sordariomycetidae</taxon>
        <taxon>Magnaporthales</taxon>
        <taxon>Pyriculariaceae</taxon>
        <taxon>Pyricularia</taxon>
    </lineage>
</organism>
<proteinExistence type="inferred from homology"/>
<reference key="1">
    <citation type="journal article" date="2005" name="Nature">
        <title>The genome sequence of the rice blast fungus Magnaporthe grisea.</title>
        <authorList>
            <person name="Dean R.A."/>
            <person name="Talbot N.J."/>
            <person name="Ebbole D.J."/>
            <person name="Farman M.L."/>
            <person name="Mitchell T.K."/>
            <person name="Orbach M.J."/>
            <person name="Thon M.R."/>
            <person name="Kulkarni R."/>
            <person name="Xu J.-R."/>
            <person name="Pan H."/>
            <person name="Read N.D."/>
            <person name="Lee Y.-H."/>
            <person name="Carbone I."/>
            <person name="Brown D."/>
            <person name="Oh Y.Y."/>
            <person name="Donofrio N."/>
            <person name="Jeong J.S."/>
            <person name="Soanes D.M."/>
            <person name="Djonovic S."/>
            <person name="Kolomiets E."/>
            <person name="Rehmeyer C."/>
            <person name="Li W."/>
            <person name="Harding M."/>
            <person name="Kim S."/>
            <person name="Lebrun M.-H."/>
            <person name="Bohnert H."/>
            <person name="Coughlan S."/>
            <person name="Butler J."/>
            <person name="Calvo S.E."/>
            <person name="Ma L.-J."/>
            <person name="Nicol R."/>
            <person name="Purcell S."/>
            <person name="Nusbaum C."/>
            <person name="Galagan J.E."/>
            <person name="Birren B.W."/>
        </authorList>
    </citation>
    <scope>NUCLEOTIDE SEQUENCE [LARGE SCALE GENOMIC DNA]</scope>
    <source>
        <strain>70-15 / ATCC MYA-4617 / FGSC 8958</strain>
    </source>
</reference>
<accession>A4R188</accession>
<accession>G4MP98</accession>
<evidence type="ECO:0000255" key="1">
    <source>
        <dbReference type="HAMAP-Rule" id="MF_03015"/>
    </source>
</evidence>
<evidence type="ECO:0000256" key="2">
    <source>
        <dbReference type="SAM" id="MobiDB-lite"/>
    </source>
</evidence>
<evidence type="ECO:0000305" key="3"/>